<gene>
    <name evidence="1" type="primary">psd</name>
    <name type="ordered locus">PSPA7_5686</name>
</gene>
<feature type="chain" id="PRO_1000026564" description="Phosphatidylserine decarboxylase beta chain" evidence="1">
    <location>
        <begin position="1"/>
        <end position="253"/>
    </location>
</feature>
<feature type="chain" id="PRO_1000026565" description="Phosphatidylserine decarboxylase alpha chain" evidence="1">
    <location>
        <begin position="254"/>
        <end position="289"/>
    </location>
</feature>
<feature type="active site" description="Charge relay system; for autoendoproteolytic cleavage activity" evidence="1">
    <location>
        <position position="92"/>
    </location>
</feature>
<feature type="active site" description="Charge relay system; for autoendoproteolytic cleavage activity" evidence="1">
    <location>
        <position position="149"/>
    </location>
</feature>
<feature type="active site" description="Charge relay system; for autoendoproteolytic cleavage activity" evidence="1">
    <location>
        <position position="254"/>
    </location>
</feature>
<feature type="active site" description="Schiff-base intermediate with substrate; via pyruvic acid; for decarboxylase activity" evidence="1">
    <location>
        <position position="254"/>
    </location>
</feature>
<feature type="site" description="Cleavage (non-hydrolytic); by autocatalysis" evidence="1">
    <location>
        <begin position="253"/>
        <end position="254"/>
    </location>
</feature>
<feature type="modified residue" description="Pyruvic acid (Ser); by autocatalysis" evidence="1">
    <location>
        <position position="254"/>
    </location>
</feature>
<reference key="1">
    <citation type="submission" date="2007-06" db="EMBL/GenBank/DDBJ databases">
        <authorList>
            <person name="Dodson R.J."/>
            <person name="Harkins D."/>
            <person name="Paulsen I.T."/>
        </authorList>
    </citation>
    <scope>NUCLEOTIDE SEQUENCE [LARGE SCALE GENOMIC DNA]</scope>
    <source>
        <strain>DSM 24068 / PA7</strain>
    </source>
</reference>
<proteinExistence type="inferred from homology"/>
<comment type="function">
    <text evidence="1">Catalyzes the formation of phosphatidylethanolamine (PtdEtn) from phosphatidylserine (PtdSer).</text>
</comment>
<comment type="catalytic activity">
    <reaction evidence="1">
        <text>a 1,2-diacyl-sn-glycero-3-phospho-L-serine + H(+) = a 1,2-diacyl-sn-glycero-3-phosphoethanolamine + CO2</text>
        <dbReference type="Rhea" id="RHEA:20828"/>
        <dbReference type="ChEBI" id="CHEBI:15378"/>
        <dbReference type="ChEBI" id="CHEBI:16526"/>
        <dbReference type="ChEBI" id="CHEBI:57262"/>
        <dbReference type="ChEBI" id="CHEBI:64612"/>
        <dbReference type="EC" id="4.1.1.65"/>
    </reaction>
</comment>
<comment type="cofactor">
    <cofactor evidence="1">
        <name>pyruvate</name>
        <dbReference type="ChEBI" id="CHEBI:15361"/>
    </cofactor>
    <text evidence="1">Binds 1 pyruvoyl group covalently per subunit.</text>
</comment>
<comment type="pathway">
    <text evidence="1">Phospholipid metabolism; phosphatidylethanolamine biosynthesis; phosphatidylethanolamine from CDP-diacylglycerol: step 2/2.</text>
</comment>
<comment type="subunit">
    <text evidence="1">Heterodimer of a large membrane-associated beta subunit and a small pyruvoyl-containing alpha subunit.</text>
</comment>
<comment type="subcellular location">
    <subcellularLocation>
        <location evidence="1">Cell membrane</location>
        <topology evidence="1">Peripheral membrane protein</topology>
    </subcellularLocation>
</comment>
<comment type="PTM">
    <text evidence="1">Is synthesized initially as an inactive proenzyme. Formation of the active enzyme involves a self-maturation process in which the active site pyruvoyl group is generated from an internal serine residue via an autocatalytic post-translational modification. Two non-identical subunits are generated from the proenzyme in this reaction, and the pyruvate is formed at the N-terminus of the alpha chain, which is derived from the carboxyl end of the proenzyme. The autoendoproteolytic cleavage occurs by a canonical serine protease mechanism, in which the side chain hydroxyl group of the serine supplies its oxygen atom to form the C-terminus of the beta chain, while the remainder of the serine residue undergoes an oxidative deamination to produce ammonia and the pyruvoyl prosthetic group on the alpha chain. During this reaction, the Ser that is part of the protease active site of the proenzyme becomes the pyruvoyl prosthetic group, which constitutes an essential element of the active site of the mature decarboxylase.</text>
</comment>
<comment type="similarity">
    <text evidence="1">Belongs to the phosphatidylserine decarboxylase family. PSD-B subfamily. Prokaryotic type I sub-subfamily.</text>
</comment>
<organism>
    <name type="scientific">Pseudomonas paraeruginosa (strain DSM 24068 / PA7)</name>
    <name type="common">Pseudomonas aeruginosa (strain PA7)</name>
    <dbReference type="NCBI Taxonomy" id="381754"/>
    <lineage>
        <taxon>Bacteria</taxon>
        <taxon>Pseudomonadati</taxon>
        <taxon>Pseudomonadota</taxon>
        <taxon>Gammaproteobacteria</taxon>
        <taxon>Pseudomonadales</taxon>
        <taxon>Pseudomonadaceae</taxon>
        <taxon>Pseudomonas</taxon>
        <taxon>Pseudomonas paraeruginosa</taxon>
    </lineage>
</organism>
<protein>
    <recommendedName>
        <fullName evidence="1">Phosphatidylserine decarboxylase proenzyme</fullName>
        <ecNumber evidence="1">4.1.1.65</ecNumber>
    </recommendedName>
    <component>
        <recommendedName>
            <fullName evidence="1">Phosphatidylserine decarboxylase alpha chain</fullName>
        </recommendedName>
    </component>
    <component>
        <recommendedName>
            <fullName evidence="1">Phosphatidylserine decarboxylase beta chain</fullName>
        </recommendedName>
    </component>
</protein>
<keyword id="KW-1003">Cell membrane</keyword>
<keyword id="KW-0210">Decarboxylase</keyword>
<keyword id="KW-0444">Lipid biosynthesis</keyword>
<keyword id="KW-0443">Lipid metabolism</keyword>
<keyword id="KW-0456">Lyase</keyword>
<keyword id="KW-0472">Membrane</keyword>
<keyword id="KW-0594">Phospholipid biosynthesis</keyword>
<keyword id="KW-1208">Phospholipid metabolism</keyword>
<keyword id="KW-0670">Pyruvate</keyword>
<keyword id="KW-0865">Zymogen</keyword>
<sequence>MSFKDRLFICCQYLLPHHLLSRLVGFAADCRATWFKDRLIAWFARRYQVDMREAQVEDLQAYEHFNAFFTRALKDGARPPAQEPGAVLCPADGAISQLGPIEHGRIFQAKGHSYSLAELLGGDAELAAPFMGGDFATVYLSPRDYHRVHMPLAGTLREMVYVPGRLFSVNRTTAENVPELFARNERVVCLFDTERGPMAVVLVGAMIVASIETVWAGLVTPPKRELKTFRYDEAARAPIHLEKGAELGRFKLGSTAIVLFGPQQVAFAQGLGAATPVRMGECLALPKQA</sequence>
<name>PSD_PSEP7</name>
<accession>A6VD70</accession>
<dbReference type="EC" id="4.1.1.65" evidence="1"/>
<dbReference type="EMBL" id="CP000744">
    <property type="protein sequence ID" value="ABR86729.1"/>
    <property type="molecule type" value="Genomic_DNA"/>
</dbReference>
<dbReference type="RefSeq" id="WP_012077645.1">
    <property type="nucleotide sequence ID" value="NC_009656.1"/>
</dbReference>
<dbReference type="SMR" id="A6VD70"/>
<dbReference type="GeneID" id="77223506"/>
<dbReference type="KEGG" id="pap:PSPA7_5686"/>
<dbReference type="HOGENOM" id="CLU_029061_4_1_6"/>
<dbReference type="UniPathway" id="UPA00558">
    <property type="reaction ID" value="UER00616"/>
</dbReference>
<dbReference type="Proteomes" id="UP000001582">
    <property type="component" value="Chromosome"/>
</dbReference>
<dbReference type="GO" id="GO:0005886">
    <property type="term" value="C:plasma membrane"/>
    <property type="evidence" value="ECO:0007669"/>
    <property type="project" value="UniProtKB-SubCell"/>
</dbReference>
<dbReference type="GO" id="GO:0004609">
    <property type="term" value="F:phosphatidylserine decarboxylase activity"/>
    <property type="evidence" value="ECO:0007669"/>
    <property type="project" value="UniProtKB-UniRule"/>
</dbReference>
<dbReference type="GO" id="GO:0006646">
    <property type="term" value="P:phosphatidylethanolamine biosynthetic process"/>
    <property type="evidence" value="ECO:0007669"/>
    <property type="project" value="UniProtKB-UniRule"/>
</dbReference>
<dbReference type="HAMAP" id="MF_00662">
    <property type="entry name" value="PS_decarb_PSD_B_type1"/>
    <property type="match status" value="1"/>
</dbReference>
<dbReference type="InterPro" id="IPR003817">
    <property type="entry name" value="PS_Dcarbxylase"/>
</dbReference>
<dbReference type="InterPro" id="IPR033177">
    <property type="entry name" value="PSD-B"/>
</dbReference>
<dbReference type="InterPro" id="IPR033178">
    <property type="entry name" value="PSD_type1_pro"/>
</dbReference>
<dbReference type="NCBIfam" id="TIGR00163">
    <property type="entry name" value="PS_decarb"/>
    <property type="match status" value="1"/>
</dbReference>
<dbReference type="PANTHER" id="PTHR10067">
    <property type="entry name" value="PHOSPHATIDYLSERINE DECARBOXYLASE"/>
    <property type="match status" value="1"/>
</dbReference>
<dbReference type="PANTHER" id="PTHR10067:SF6">
    <property type="entry name" value="PHOSPHATIDYLSERINE DECARBOXYLASE PROENZYME, MITOCHONDRIAL"/>
    <property type="match status" value="1"/>
</dbReference>
<dbReference type="Pfam" id="PF02666">
    <property type="entry name" value="PS_Dcarbxylase"/>
    <property type="match status" value="1"/>
</dbReference>
<evidence type="ECO:0000255" key="1">
    <source>
        <dbReference type="HAMAP-Rule" id="MF_00662"/>
    </source>
</evidence>